<organism>
    <name type="scientific">Paraburkholderia xenovorans (strain LB400)</name>
    <dbReference type="NCBI Taxonomy" id="266265"/>
    <lineage>
        <taxon>Bacteria</taxon>
        <taxon>Pseudomonadati</taxon>
        <taxon>Pseudomonadota</taxon>
        <taxon>Betaproteobacteria</taxon>
        <taxon>Burkholderiales</taxon>
        <taxon>Burkholderiaceae</taxon>
        <taxon>Paraburkholderia</taxon>
    </lineage>
</organism>
<dbReference type="EMBL" id="CP000270">
    <property type="protein sequence ID" value="ABE32318.1"/>
    <property type="molecule type" value="Genomic_DNA"/>
</dbReference>
<dbReference type="RefSeq" id="WP_007180436.1">
    <property type="nucleotide sequence ID" value="NZ_CP008760.1"/>
</dbReference>
<dbReference type="SMR" id="Q13UC1"/>
<dbReference type="STRING" id="266265.Bxe_A0616"/>
<dbReference type="KEGG" id="bxb:DR64_2784"/>
<dbReference type="KEGG" id="bxe:Bxe_A0616"/>
<dbReference type="eggNOG" id="COG0632">
    <property type="taxonomic scope" value="Bacteria"/>
</dbReference>
<dbReference type="OrthoDB" id="5293449at2"/>
<dbReference type="Proteomes" id="UP000001817">
    <property type="component" value="Chromosome 1"/>
</dbReference>
<dbReference type="GO" id="GO:0005737">
    <property type="term" value="C:cytoplasm"/>
    <property type="evidence" value="ECO:0007669"/>
    <property type="project" value="UniProtKB-SubCell"/>
</dbReference>
<dbReference type="GO" id="GO:0009379">
    <property type="term" value="C:Holliday junction helicase complex"/>
    <property type="evidence" value="ECO:0007669"/>
    <property type="project" value="InterPro"/>
</dbReference>
<dbReference type="GO" id="GO:0048476">
    <property type="term" value="C:Holliday junction resolvase complex"/>
    <property type="evidence" value="ECO:0007669"/>
    <property type="project" value="UniProtKB-UniRule"/>
</dbReference>
<dbReference type="GO" id="GO:0005524">
    <property type="term" value="F:ATP binding"/>
    <property type="evidence" value="ECO:0007669"/>
    <property type="project" value="InterPro"/>
</dbReference>
<dbReference type="GO" id="GO:0000400">
    <property type="term" value="F:four-way junction DNA binding"/>
    <property type="evidence" value="ECO:0007669"/>
    <property type="project" value="UniProtKB-UniRule"/>
</dbReference>
<dbReference type="GO" id="GO:0009378">
    <property type="term" value="F:four-way junction helicase activity"/>
    <property type="evidence" value="ECO:0007669"/>
    <property type="project" value="InterPro"/>
</dbReference>
<dbReference type="GO" id="GO:0006310">
    <property type="term" value="P:DNA recombination"/>
    <property type="evidence" value="ECO:0007669"/>
    <property type="project" value="UniProtKB-UniRule"/>
</dbReference>
<dbReference type="GO" id="GO:0006281">
    <property type="term" value="P:DNA repair"/>
    <property type="evidence" value="ECO:0007669"/>
    <property type="project" value="UniProtKB-UniRule"/>
</dbReference>
<dbReference type="CDD" id="cd14332">
    <property type="entry name" value="UBA_RuvA_C"/>
    <property type="match status" value="1"/>
</dbReference>
<dbReference type="Gene3D" id="1.10.150.20">
    <property type="entry name" value="5' to 3' exonuclease, C-terminal subdomain"/>
    <property type="match status" value="1"/>
</dbReference>
<dbReference type="Gene3D" id="1.10.8.10">
    <property type="entry name" value="DNA helicase RuvA subunit, C-terminal domain"/>
    <property type="match status" value="1"/>
</dbReference>
<dbReference type="Gene3D" id="2.40.50.140">
    <property type="entry name" value="Nucleic acid-binding proteins"/>
    <property type="match status" value="1"/>
</dbReference>
<dbReference type="HAMAP" id="MF_00031">
    <property type="entry name" value="DNA_HJ_migration_RuvA"/>
    <property type="match status" value="1"/>
</dbReference>
<dbReference type="InterPro" id="IPR013849">
    <property type="entry name" value="DNA_helicase_Holl-junc_RuvA_I"/>
</dbReference>
<dbReference type="InterPro" id="IPR003583">
    <property type="entry name" value="Hlx-hairpin-Hlx_DNA-bd_motif"/>
</dbReference>
<dbReference type="InterPro" id="IPR012340">
    <property type="entry name" value="NA-bd_OB-fold"/>
</dbReference>
<dbReference type="InterPro" id="IPR000085">
    <property type="entry name" value="RuvA"/>
</dbReference>
<dbReference type="InterPro" id="IPR010994">
    <property type="entry name" value="RuvA_2-like"/>
</dbReference>
<dbReference type="InterPro" id="IPR011114">
    <property type="entry name" value="RuvA_C"/>
</dbReference>
<dbReference type="InterPro" id="IPR036267">
    <property type="entry name" value="RuvA_C_sf"/>
</dbReference>
<dbReference type="NCBIfam" id="TIGR00084">
    <property type="entry name" value="ruvA"/>
    <property type="match status" value="1"/>
</dbReference>
<dbReference type="Pfam" id="PF14520">
    <property type="entry name" value="HHH_5"/>
    <property type="match status" value="1"/>
</dbReference>
<dbReference type="Pfam" id="PF07499">
    <property type="entry name" value="RuvA_C"/>
    <property type="match status" value="1"/>
</dbReference>
<dbReference type="Pfam" id="PF01330">
    <property type="entry name" value="RuvA_N"/>
    <property type="match status" value="1"/>
</dbReference>
<dbReference type="SMART" id="SM00278">
    <property type="entry name" value="HhH1"/>
    <property type="match status" value="2"/>
</dbReference>
<dbReference type="SUPFAM" id="SSF46929">
    <property type="entry name" value="DNA helicase RuvA subunit, C-terminal domain"/>
    <property type="match status" value="1"/>
</dbReference>
<dbReference type="SUPFAM" id="SSF50249">
    <property type="entry name" value="Nucleic acid-binding proteins"/>
    <property type="match status" value="1"/>
</dbReference>
<dbReference type="SUPFAM" id="SSF47781">
    <property type="entry name" value="RuvA domain 2-like"/>
    <property type="match status" value="1"/>
</dbReference>
<accession>Q13UC1</accession>
<name>RUVA_PARXL</name>
<gene>
    <name evidence="1" type="primary">ruvA</name>
    <name type="ordered locus">Bxeno_A3780</name>
    <name type="ORF">Bxe_A0616</name>
</gene>
<keyword id="KW-0963">Cytoplasm</keyword>
<keyword id="KW-0227">DNA damage</keyword>
<keyword id="KW-0233">DNA recombination</keyword>
<keyword id="KW-0234">DNA repair</keyword>
<keyword id="KW-0238">DNA-binding</keyword>
<keyword id="KW-1185">Reference proteome</keyword>
<reference key="1">
    <citation type="journal article" date="2006" name="Proc. Natl. Acad. Sci. U.S.A.">
        <title>Burkholderia xenovorans LB400 harbors a multi-replicon, 9.73-Mbp genome shaped for versatility.</title>
        <authorList>
            <person name="Chain P.S.G."/>
            <person name="Denef V.J."/>
            <person name="Konstantinidis K.T."/>
            <person name="Vergez L.M."/>
            <person name="Agullo L."/>
            <person name="Reyes V.L."/>
            <person name="Hauser L."/>
            <person name="Cordova M."/>
            <person name="Gomez L."/>
            <person name="Gonzalez M."/>
            <person name="Land M."/>
            <person name="Lao V."/>
            <person name="Larimer F."/>
            <person name="LiPuma J.J."/>
            <person name="Mahenthiralingam E."/>
            <person name="Malfatti S.A."/>
            <person name="Marx C.J."/>
            <person name="Parnell J.J."/>
            <person name="Ramette A."/>
            <person name="Richardson P."/>
            <person name="Seeger M."/>
            <person name="Smith D."/>
            <person name="Spilker T."/>
            <person name="Sul W.J."/>
            <person name="Tsoi T.V."/>
            <person name="Ulrich L.E."/>
            <person name="Zhulin I.B."/>
            <person name="Tiedje J.M."/>
        </authorList>
    </citation>
    <scope>NUCLEOTIDE SEQUENCE [LARGE SCALE GENOMIC DNA]</scope>
    <source>
        <strain>LB400</strain>
    </source>
</reference>
<proteinExistence type="inferred from homology"/>
<evidence type="ECO:0000255" key="1">
    <source>
        <dbReference type="HAMAP-Rule" id="MF_00031"/>
    </source>
</evidence>
<sequence>MIGRIAGVLLEKNPPHLLVDCNGVGYEVDVPMSTFYNLPSTGERVVLLTQMIVREDAHLLYGFGTAEERSTFRELLKISGIGARMALAVLSGMSVHELAQTVTMQDAARLTRVPGIGKKTAERLLLELKGKIGADLGAMAGAASASDHASDILNALLALGYSEKEALAAVKNVPAGTGVSEGIKLALKALSKG</sequence>
<protein>
    <recommendedName>
        <fullName evidence="1">Holliday junction branch migration complex subunit RuvA</fullName>
    </recommendedName>
</protein>
<feature type="chain" id="PRO_1000002418" description="Holliday junction branch migration complex subunit RuvA">
    <location>
        <begin position="1"/>
        <end position="193"/>
    </location>
</feature>
<feature type="region of interest" description="Domain I" evidence="1">
    <location>
        <begin position="1"/>
        <end position="64"/>
    </location>
</feature>
<feature type="region of interest" description="Domain II" evidence="1">
    <location>
        <begin position="65"/>
        <end position="139"/>
    </location>
</feature>
<feature type="region of interest" description="Flexible linker" evidence="1">
    <location>
        <begin position="139"/>
        <end position="143"/>
    </location>
</feature>
<feature type="region of interest" description="Domain III" evidence="1">
    <location>
        <begin position="144"/>
        <end position="193"/>
    </location>
</feature>
<comment type="function">
    <text evidence="1">The RuvA-RuvB-RuvC complex processes Holliday junction (HJ) DNA during genetic recombination and DNA repair, while the RuvA-RuvB complex plays an important role in the rescue of blocked DNA replication forks via replication fork reversal (RFR). RuvA specifically binds to HJ cruciform DNA, conferring on it an open structure. The RuvB hexamer acts as an ATP-dependent pump, pulling dsDNA into and through the RuvAB complex. HJ branch migration allows RuvC to scan DNA until it finds its consensus sequence, where it cleaves and resolves the cruciform DNA.</text>
</comment>
<comment type="subunit">
    <text evidence="1">Homotetramer. Forms an RuvA(8)-RuvB(12)-Holliday junction (HJ) complex. HJ DNA is sandwiched between 2 RuvA tetramers; dsDNA enters through RuvA and exits via RuvB. An RuvB hexamer assembles on each DNA strand where it exits the tetramer. Each RuvB hexamer is contacted by two RuvA subunits (via domain III) on 2 adjacent RuvB subunits; this complex drives branch migration. In the full resolvosome a probable DNA-RuvA(4)-RuvB(12)-RuvC(2) complex forms which resolves the HJ.</text>
</comment>
<comment type="subcellular location">
    <subcellularLocation>
        <location evidence="1">Cytoplasm</location>
    </subcellularLocation>
</comment>
<comment type="domain">
    <text evidence="1">Has three domains with a flexible linker between the domains II and III and assumes an 'L' shape. Domain III is highly mobile and contacts RuvB.</text>
</comment>
<comment type="similarity">
    <text evidence="1">Belongs to the RuvA family.</text>
</comment>